<comment type="similarity">
    <text evidence="1">Belongs to the bacterial ribosomal protein bL28 family.</text>
</comment>
<sequence>MARVCTITGRKARSGNSRSHAMNATKRKWGANLQKVRVRIDGKVQRVYVSARALKSGKIERV</sequence>
<feature type="chain" id="PRO_0000178421" description="Large ribosomal subunit protein bL28">
    <location>
        <begin position="1"/>
        <end position="62"/>
    </location>
</feature>
<feature type="region of interest" description="Disordered" evidence="2">
    <location>
        <begin position="1"/>
        <end position="28"/>
    </location>
</feature>
<evidence type="ECO:0000255" key="1">
    <source>
        <dbReference type="HAMAP-Rule" id="MF_00373"/>
    </source>
</evidence>
<evidence type="ECO:0000256" key="2">
    <source>
        <dbReference type="SAM" id="MobiDB-lite"/>
    </source>
</evidence>
<evidence type="ECO:0000305" key="3"/>
<protein>
    <recommendedName>
        <fullName evidence="1">Large ribosomal subunit protein bL28</fullName>
    </recommendedName>
    <alternativeName>
        <fullName evidence="3">50S ribosomal protein L28</fullName>
    </alternativeName>
</protein>
<keyword id="KW-1185">Reference proteome</keyword>
<keyword id="KW-0687">Ribonucleoprotein</keyword>
<keyword id="KW-0689">Ribosomal protein</keyword>
<name>RL28_BACAN</name>
<organism>
    <name type="scientific">Bacillus anthracis</name>
    <dbReference type="NCBI Taxonomy" id="1392"/>
    <lineage>
        <taxon>Bacteria</taxon>
        <taxon>Bacillati</taxon>
        <taxon>Bacillota</taxon>
        <taxon>Bacilli</taxon>
        <taxon>Bacillales</taxon>
        <taxon>Bacillaceae</taxon>
        <taxon>Bacillus</taxon>
        <taxon>Bacillus cereus group</taxon>
    </lineage>
</organism>
<dbReference type="EMBL" id="AE016879">
    <property type="protein sequence ID" value="AAP27724.1"/>
    <property type="molecule type" value="Genomic_DNA"/>
</dbReference>
<dbReference type="EMBL" id="AE017334">
    <property type="protein sequence ID" value="AAT33111.1"/>
    <property type="molecule type" value="Genomic_DNA"/>
</dbReference>
<dbReference type="EMBL" id="AE017225">
    <property type="protein sequence ID" value="AAT56011.1"/>
    <property type="molecule type" value="Genomic_DNA"/>
</dbReference>
<dbReference type="RefSeq" id="NP_846238.1">
    <property type="nucleotide sequence ID" value="NC_003997.3"/>
</dbReference>
<dbReference type="RefSeq" id="WP_000124778.1">
    <property type="nucleotide sequence ID" value="NZ_WXXJ01000026.1"/>
</dbReference>
<dbReference type="RefSeq" id="YP_029960.1">
    <property type="nucleotide sequence ID" value="NC_005945.1"/>
</dbReference>
<dbReference type="SMR" id="Q81WI0"/>
<dbReference type="STRING" id="261594.GBAA_3996"/>
<dbReference type="DNASU" id="1086761"/>
<dbReference type="GeneID" id="45023686"/>
<dbReference type="KEGG" id="ban:BA_3996"/>
<dbReference type="KEGG" id="banh:HYU01_19530"/>
<dbReference type="KEGG" id="bar:GBAA_3996"/>
<dbReference type="KEGG" id="bat:BAS3709"/>
<dbReference type="PATRIC" id="fig|198094.11.peg.3966"/>
<dbReference type="eggNOG" id="COG0227">
    <property type="taxonomic scope" value="Bacteria"/>
</dbReference>
<dbReference type="HOGENOM" id="CLU_064548_7_1_9"/>
<dbReference type="OMA" id="VQKVRIM"/>
<dbReference type="OrthoDB" id="9805609at2"/>
<dbReference type="Proteomes" id="UP000000427">
    <property type="component" value="Chromosome"/>
</dbReference>
<dbReference type="Proteomes" id="UP000000594">
    <property type="component" value="Chromosome"/>
</dbReference>
<dbReference type="GO" id="GO:1990904">
    <property type="term" value="C:ribonucleoprotein complex"/>
    <property type="evidence" value="ECO:0007669"/>
    <property type="project" value="UniProtKB-KW"/>
</dbReference>
<dbReference type="GO" id="GO:0005840">
    <property type="term" value="C:ribosome"/>
    <property type="evidence" value="ECO:0007669"/>
    <property type="project" value="UniProtKB-KW"/>
</dbReference>
<dbReference type="GO" id="GO:0003735">
    <property type="term" value="F:structural constituent of ribosome"/>
    <property type="evidence" value="ECO:0007669"/>
    <property type="project" value="InterPro"/>
</dbReference>
<dbReference type="GO" id="GO:0006412">
    <property type="term" value="P:translation"/>
    <property type="evidence" value="ECO:0007669"/>
    <property type="project" value="UniProtKB-UniRule"/>
</dbReference>
<dbReference type="Gene3D" id="2.30.170.40">
    <property type="entry name" value="Ribosomal protein L28/L24"/>
    <property type="match status" value="1"/>
</dbReference>
<dbReference type="HAMAP" id="MF_00373">
    <property type="entry name" value="Ribosomal_bL28"/>
    <property type="match status" value="1"/>
</dbReference>
<dbReference type="InterPro" id="IPR050096">
    <property type="entry name" value="Bacterial_rp_bL28"/>
</dbReference>
<dbReference type="InterPro" id="IPR026569">
    <property type="entry name" value="Ribosomal_bL28"/>
</dbReference>
<dbReference type="InterPro" id="IPR034704">
    <property type="entry name" value="Ribosomal_bL28/bL31-like_sf"/>
</dbReference>
<dbReference type="InterPro" id="IPR001383">
    <property type="entry name" value="Ribosomal_bL28_bact-type"/>
</dbReference>
<dbReference type="InterPro" id="IPR037147">
    <property type="entry name" value="Ribosomal_bL28_sf"/>
</dbReference>
<dbReference type="NCBIfam" id="TIGR00009">
    <property type="entry name" value="L28"/>
    <property type="match status" value="1"/>
</dbReference>
<dbReference type="PANTHER" id="PTHR39080">
    <property type="entry name" value="50S RIBOSOMAL PROTEIN L28"/>
    <property type="match status" value="1"/>
</dbReference>
<dbReference type="PANTHER" id="PTHR39080:SF1">
    <property type="entry name" value="LARGE RIBOSOMAL SUBUNIT PROTEIN BL28A"/>
    <property type="match status" value="1"/>
</dbReference>
<dbReference type="Pfam" id="PF00830">
    <property type="entry name" value="Ribosomal_L28"/>
    <property type="match status" value="1"/>
</dbReference>
<dbReference type="SUPFAM" id="SSF143800">
    <property type="entry name" value="L28p-like"/>
    <property type="match status" value="1"/>
</dbReference>
<gene>
    <name evidence="1" type="primary">rpmB</name>
    <name type="ordered locus">BA_3996</name>
    <name type="ordered locus">GBAA_3996</name>
    <name type="ordered locus">BAS3709</name>
</gene>
<accession>Q81WI0</accession>
<accession>Q6HUM8</accession>
<accession>Q6KNW2</accession>
<reference key="1">
    <citation type="journal article" date="2003" name="Nature">
        <title>The genome sequence of Bacillus anthracis Ames and comparison to closely related bacteria.</title>
        <authorList>
            <person name="Read T.D."/>
            <person name="Peterson S.N."/>
            <person name="Tourasse N.J."/>
            <person name="Baillie L.W."/>
            <person name="Paulsen I.T."/>
            <person name="Nelson K.E."/>
            <person name="Tettelin H."/>
            <person name="Fouts D.E."/>
            <person name="Eisen J.A."/>
            <person name="Gill S.R."/>
            <person name="Holtzapple E.K."/>
            <person name="Okstad O.A."/>
            <person name="Helgason E."/>
            <person name="Rilstone J."/>
            <person name="Wu M."/>
            <person name="Kolonay J.F."/>
            <person name="Beanan M.J."/>
            <person name="Dodson R.J."/>
            <person name="Brinkac L.M."/>
            <person name="Gwinn M.L."/>
            <person name="DeBoy R.T."/>
            <person name="Madpu R."/>
            <person name="Daugherty S.C."/>
            <person name="Durkin A.S."/>
            <person name="Haft D.H."/>
            <person name="Nelson W.C."/>
            <person name="Peterson J.D."/>
            <person name="Pop M."/>
            <person name="Khouri H.M."/>
            <person name="Radune D."/>
            <person name="Benton J.L."/>
            <person name="Mahamoud Y."/>
            <person name="Jiang L."/>
            <person name="Hance I.R."/>
            <person name="Weidman J.F."/>
            <person name="Berry K.J."/>
            <person name="Plaut R.D."/>
            <person name="Wolf A.M."/>
            <person name="Watkins K.L."/>
            <person name="Nierman W.C."/>
            <person name="Hazen A."/>
            <person name="Cline R.T."/>
            <person name="Redmond C."/>
            <person name="Thwaite J.E."/>
            <person name="White O."/>
            <person name="Salzberg S.L."/>
            <person name="Thomason B."/>
            <person name="Friedlander A.M."/>
            <person name="Koehler T.M."/>
            <person name="Hanna P.C."/>
            <person name="Kolstoe A.-B."/>
            <person name="Fraser C.M."/>
        </authorList>
    </citation>
    <scope>NUCLEOTIDE SEQUENCE [LARGE SCALE GENOMIC DNA]</scope>
    <source>
        <strain>Ames / isolate Porton</strain>
    </source>
</reference>
<reference key="2">
    <citation type="journal article" date="2009" name="J. Bacteriol.">
        <title>The complete genome sequence of Bacillus anthracis Ames 'Ancestor'.</title>
        <authorList>
            <person name="Ravel J."/>
            <person name="Jiang L."/>
            <person name="Stanley S.T."/>
            <person name="Wilson M.R."/>
            <person name="Decker R.S."/>
            <person name="Read T.D."/>
            <person name="Worsham P."/>
            <person name="Keim P.S."/>
            <person name="Salzberg S.L."/>
            <person name="Fraser-Liggett C.M."/>
            <person name="Rasko D.A."/>
        </authorList>
    </citation>
    <scope>NUCLEOTIDE SEQUENCE [LARGE SCALE GENOMIC DNA]</scope>
    <source>
        <strain>Ames ancestor</strain>
    </source>
</reference>
<reference key="3">
    <citation type="submission" date="2004-01" db="EMBL/GenBank/DDBJ databases">
        <title>Complete genome sequence of Bacillus anthracis Sterne.</title>
        <authorList>
            <person name="Brettin T.S."/>
            <person name="Bruce D."/>
            <person name="Challacombe J.F."/>
            <person name="Gilna P."/>
            <person name="Han C."/>
            <person name="Hill K."/>
            <person name="Hitchcock P."/>
            <person name="Jackson P."/>
            <person name="Keim P."/>
            <person name="Longmire J."/>
            <person name="Lucas S."/>
            <person name="Okinaka R."/>
            <person name="Richardson P."/>
            <person name="Rubin E."/>
            <person name="Tice H."/>
        </authorList>
    </citation>
    <scope>NUCLEOTIDE SEQUENCE [LARGE SCALE GENOMIC DNA]</scope>
    <source>
        <strain>Sterne</strain>
    </source>
</reference>
<proteinExistence type="inferred from homology"/>